<feature type="chain" id="PRO_0000245237" description="AN1-type zinc finger protein 6">
    <location>
        <begin position="1"/>
        <end position="208"/>
    </location>
</feature>
<feature type="zinc finger region" description="A20-type" evidence="5">
    <location>
        <begin position="8"/>
        <end position="42"/>
    </location>
</feature>
<feature type="zinc finger region" description="AN1-type" evidence="4">
    <location>
        <begin position="143"/>
        <end position="189"/>
    </location>
</feature>
<feature type="region of interest" description="Disordered" evidence="6">
    <location>
        <begin position="41"/>
        <end position="140"/>
    </location>
</feature>
<feature type="compositionally biased region" description="Polar residues" evidence="6">
    <location>
        <begin position="41"/>
        <end position="68"/>
    </location>
</feature>
<feature type="compositionally biased region" description="Low complexity" evidence="6">
    <location>
        <begin position="75"/>
        <end position="94"/>
    </location>
</feature>
<feature type="compositionally biased region" description="Polar residues" evidence="6">
    <location>
        <begin position="95"/>
        <end position="110"/>
    </location>
</feature>
<feature type="compositionally biased region" description="Polar residues" evidence="6">
    <location>
        <begin position="120"/>
        <end position="133"/>
    </location>
</feature>
<feature type="binding site" evidence="5">
    <location>
        <position position="14"/>
    </location>
    <ligand>
        <name>Zn(2+)</name>
        <dbReference type="ChEBI" id="CHEBI:29105"/>
        <label>1</label>
    </ligand>
</feature>
<feature type="binding site" evidence="5">
    <location>
        <position position="18"/>
    </location>
    <ligand>
        <name>Zn(2+)</name>
        <dbReference type="ChEBI" id="CHEBI:29105"/>
        <label>1</label>
    </ligand>
</feature>
<feature type="binding site" evidence="5">
    <location>
        <position position="30"/>
    </location>
    <ligand>
        <name>Zn(2+)</name>
        <dbReference type="ChEBI" id="CHEBI:29105"/>
        <label>1</label>
    </ligand>
</feature>
<feature type="binding site" evidence="5">
    <location>
        <position position="33"/>
    </location>
    <ligand>
        <name>Zn(2+)</name>
        <dbReference type="ChEBI" id="CHEBI:29105"/>
        <label>1</label>
    </ligand>
</feature>
<feature type="binding site" evidence="4">
    <location>
        <position position="149"/>
    </location>
    <ligand>
        <name>Zn(2+)</name>
        <dbReference type="ChEBI" id="CHEBI:29105"/>
        <label>2</label>
    </ligand>
</feature>
<feature type="binding site" evidence="4">
    <location>
        <position position="152"/>
    </location>
    <ligand>
        <name>Zn(2+)</name>
        <dbReference type="ChEBI" id="CHEBI:29105"/>
        <label>2</label>
    </ligand>
</feature>
<feature type="binding site" evidence="4">
    <location>
        <position position="163"/>
    </location>
    <ligand>
        <name>Zn(2+)</name>
        <dbReference type="ChEBI" id="CHEBI:29105"/>
        <label>3</label>
    </ligand>
</feature>
<feature type="binding site" evidence="4">
    <location>
        <position position="165"/>
    </location>
    <ligand>
        <name>Zn(2+)</name>
        <dbReference type="ChEBI" id="CHEBI:29105"/>
        <label>3</label>
    </ligand>
</feature>
<feature type="binding site" evidence="4">
    <location>
        <position position="170"/>
    </location>
    <ligand>
        <name>Zn(2+)</name>
        <dbReference type="ChEBI" id="CHEBI:29105"/>
        <label>2</label>
    </ligand>
</feature>
<feature type="binding site" evidence="4">
    <location>
        <position position="173"/>
    </location>
    <ligand>
        <name>Zn(2+)</name>
        <dbReference type="ChEBI" id="CHEBI:29105"/>
        <label>2</label>
    </ligand>
</feature>
<feature type="binding site" evidence="4">
    <location>
        <position position="179"/>
    </location>
    <ligand>
        <name>Zn(2+)</name>
        <dbReference type="ChEBI" id="CHEBI:29105"/>
        <label>3</label>
    </ligand>
</feature>
<feature type="binding site" evidence="4">
    <location>
        <position position="181"/>
    </location>
    <ligand>
        <name>Zn(2+)</name>
        <dbReference type="ChEBI" id="CHEBI:29105"/>
        <label>3</label>
    </ligand>
</feature>
<feature type="modified residue" description="Phosphoserine" evidence="2">
    <location>
        <position position="49"/>
    </location>
</feature>
<feature type="modified residue" description="N6-acetyllysine" evidence="3">
    <location>
        <position position="204"/>
    </location>
</feature>
<proteinExistence type="evidence at transcript level"/>
<sequence length="208" mass="22599">MAQETNHSQVPMLCSTGCGFYGNPRTNGMCSVCYKEHLQRQNSSNGRISPPATSVSSLSESLPVQCTDGSVPEAQSTLDSTSSSMQPSPVSNQSLLSESVASSQLDSTSVDKAVPETEDLQASVSDTAQQPSEEQSKSLEKPKQKKNRCFMCRKKVGLTGFECRCGNVYCGVHRYSDVHNCSYNYKADAAEKIRKENPVVVGEKIQKI</sequence>
<keyword id="KW-0007">Acetylation</keyword>
<keyword id="KW-0053">Apoptosis</keyword>
<keyword id="KW-0963">Cytoplasm</keyword>
<keyword id="KW-0479">Metal-binding</keyword>
<keyword id="KW-0597">Phosphoprotein</keyword>
<keyword id="KW-0653">Protein transport</keyword>
<keyword id="KW-1185">Reference proteome</keyword>
<keyword id="KW-0813">Transport</keyword>
<keyword id="KW-0862">Zinc</keyword>
<keyword id="KW-0863">Zinc-finger</keyword>
<protein>
    <recommendedName>
        <fullName>AN1-type zinc finger protein 6</fullName>
    </recommendedName>
    <alternativeName>
        <fullName>Zinc finger A20 domain-containing protein 3</fullName>
    </alternativeName>
</protein>
<gene>
    <name type="primary">ZFAND6</name>
    <name type="synonym">ZA20D3</name>
</gene>
<evidence type="ECO:0000250" key="1"/>
<evidence type="ECO:0000250" key="2">
    <source>
        <dbReference type="UniProtKB" id="Q6FIF0"/>
    </source>
</evidence>
<evidence type="ECO:0000250" key="3">
    <source>
        <dbReference type="UniProtKB" id="Q9DCH6"/>
    </source>
</evidence>
<evidence type="ECO:0000255" key="4">
    <source>
        <dbReference type="PROSITE-ProRule" id="PRU00449"/>
    </source>
</evidence>
<evidence type="ECO:0000255" key="5">
    <source>
        <dbReference type="PROSITE-ProRule" id="PRU00451"/>
    </source>
</evidence>
<evidence type="ECO:0000256" key="6">
    <source>
        <dbReference type="SAM" id="MobiDB-lite"/>
    </source>
</evidence>
<name>ZFAN6_PONAB</name>
<reference key="1">
    <citation type="submission" date="2004-11" db="EMBL/GenBank/DDBJ databases">
        <authorList>
            <consortium name="The German cDNA consortium"/>
        </authorList>
    </citation>
    <scope>NUCLEOTIDE SEQUENCE [LARGE SCALE MRNA]</scope>
    <source>
        <tissue>Brain cortex</tissue>
    </source>
</reference>
<dbReference type="EMBL" id="CR860033">
    <property type="protein sequence ID" value="CAH92184.1"/>
    <property type="molecule type" value="mRNA"/>
</dbReference>
<dbReference type="RefSeq" id="NP_001127520.1">
    <property type="nucleotide sequence ID" value="NM_001134048.1"/>
</dbReference>
<dbReference type="RefSeq" id="XP_024087974.1">
    <property type="nucleotide sequence ID" value="XM_024232206.2"/>
</dbReference>
<dbReference type="RefSeq" id="XP_024087975.1">
    <property type="nucleotide sequence ID" value="XM_024232207.2"/>
</dbReference>
<dbReference type="RefSeq" id="XP_024087976.1">
    <property type="nucleotide sequence ID" value="XM_024232208.3"/>
</dbReference>
<dbReference type="RefSeq" id="XP_024087977.1">
    <property type="nucleotide sequence ID" value="XM_024232209.3"/>
</dbReference>
<dbReference type="RefSeq" id="XP_054387210.1">
    <property type="nucleotide sequence ID" value="XM_054531235.1"/>
</dbReference>
<dbReference type="RefSeq" id="XP_054387211.1">
    <property type="nucleotide sequence ID" value="XM_054531236.1"/>
</dbReference>
<dbReference type="RefSeq" id="XP_054387212.1">
    <property type="nucleotide sequence ID" value="XM_054531237.1"/>
</dbReference>
<dbReference type="RefSeq" id="XP_054387214.1">
    <property type="nucleotide sequence ID" value="XM_054531239.2"/>
</dbReference>
<dbReference type="RefSeq" id="XP_054387215.1">
    <property type="nucleotide sequence ID" value="XM_054531240.1"/>
</dbReference>
<dbReference type="RefSeq" id="XP_054387216.1">
    <property type="nucleotide sequence ID" value="XM_054531241.1"/>
</dbReference>
<dbReference type="RefSeq" id="XP_054387218.1">
    <property type="nucleotide sequence ID" value="XM_054531243.1"/>
</dbReference>
<dbReference type="RefSeq" id="XP_054387219.1">
    <property type="nucleotide sequence ID" value="XM_054531244.2"/>
</dbReference>
<dbReference type="RefSeq" id="XP_054387220.1">
    <property type="nucleotide sequence ID" value="XM_054531245.2"/>
</dbReference>
<dbReference type="RefSeq" id="XP_063572138.1">
    <property type="nucleotide sequence ID" value="XM_063716068.1"/>
</dbReference>
<dbReference type="RefSeq" id="XP_063572139.1">
    <property type="nucleotide sequence ID" value="XM_063716069.1"/>
</dbReference>
<dbReference type="RefSeq" id="XP_063572140.1">
    <property type="nucleotide sequence ID" value="XM_063716070.1"/>
</dbReference>
<dbReference type="RefSeq" id="XP_063572141.1">
    <property type="nucleotide sequence ID" value="XM_063716071.1"/>
</dbReference>
<dbReference type="RefSeq" id="XP_063572142.1">
    <property type="nucleotide sequence ID" value="XM_063716072.1"/>
</dbReference>
<dbReference type="SMR" id="Q5R7S6"/>
<dbReference type="FunCoup" id="Q5R7S6">
    <property type="interactions" value="576"/>
</dbReference>
<dbReference type="STRING" id="9601.ENSPPYP00000007617"/>
<dbReference type="Ensembl" id="ENSPPYT00000007926.3">
    <property type="protein sequence ID" value="ENSPPYP00000007617.2"/>
    <property type="gene ID" value="ENSPPYG00000006712.3"/>
</dbReference>
<dbReference type="GeneID" id="100174596"/>
<dbReference type="KEGG" id="pon:100174596"/>
<dbReference type="CTD" id="54469"/>
<dbReference type="eggNOG" id="KOG3173">
    <property type="taxonomic scope" value="Eukaryota"/>
</dbReference>
<dbReference type="GeneTree" id="ENSGT00940000160833"/>
<dbReference type="HOGENOM" id="CLU_057016_1_0_1"/>
<dbReference type="InParanoid" id="Q5R7S6"/>
<dbReference type="OMA" id="YCAMHRY"/>
<dbReference type="OrthoDB" id="428577at2759"/>
<dbReference type="TreeFam" id="TF313612"/>
<dbReference type="Proteomes" id="UP000001595">
    <property type="component" value="Chromosome 15"/>
</dbReference>
<dbReference type="GO" id="GO:0005737">
    <property type="term" value="C:cytoplasm"/>
    <property type="evidence" value="ECO:0007669"/>
    <property type="project" value="UniProtKB-SubCell"/>
</dbReference>
<dbReference type="GO" id="GO:0003677">
    <property type="term" value="F:DNA binding"/>
    <property type="evidence" value="ECO:0007669"/>
    <property type="project" value="InterPro"/>
</dbReference>
<dbReference type="GO" id="GO:0031593">
    <property type="term" value="F:polyubiquitin modification-dependent protein binding"/>
    <property type="evidence" value="ECO:0000250"/>
    <property type="project" value="UniProtKB"/>
</dbReference>
<dbReference type="GO" id="GO:0008270">
    <property type="term" value="F:zinc ion binding"/>
    <property type="evidence" value="ECO:0007669"/>
    <property type="project" value="UniProtKB-KW"/>
</dbReference>
<dbReference type="GO" id="GO:0006915">
    <property type="term" value="P:apoptotic process"/>
    <property type="evidence" value="ECO:0007669"/>
    <property type="project" value="UniProtKB-KW"/>
</dbReference>
<dbReference type="GO" id="GO:0071356">
    <property type="term" value="P:cellular response to tumor necrosis factor"/>
    <property type="evidence" value="ECO:0000250"/>
    <property type="project" value="UniProtKB"/>
</dbReference>
<dbReference type="GO" id="GO:0043066">
    <property type="term" value="P:negative regulation of apoptotic process"/>
    <property type="evidence" value="ECO:0000250"/>
    <property type="project" value="UniProtKB"/>
</dbReference>
<dbReference type="GO" id="GO:0006625">
    <property type="term" value="P:protein targeting to peroxisome"/>
    <property type="evidence" value="ECO:0000250"/>
    <property type="project" value="UniProtKB"/>
</dbReference>
<dbReference type="GO" id="GO:0015031">
    <property type="term" value="P:protein transport"/>
    <property type="evidence" value="ECO:0007669"/>
    <property type="project" value="UniProtKB-KW"/>
</dbReference>
<dbReference type="GO" id="GO:0043122">
    <property type="term" value="P:regulation of canonical NF-kappaB signal transduction"/>
    <property type="evidence" value="ECO:0000250"/>
    <property type="project" value="UniProtKB"/>
</dbReference>
<dbReference type="FunFam" id="1.20.5.4770:FF:000001">
    <property type="entry name" value="Zinc finger AN1-type containing 6"/>
    <property type="match status" value="1"/>
</dbReference>
<dbReference type="FunFam" id="4.10.1110.10:FF:000001">
    <property type="entry name" value="Zinc finger AN1-type containing 6"/>
    <property type="match status" value="1"/>
</dbReference>
<dbReference type="Gene3D" id="1.20.5.4770">
    <property type="match status" value="1"/>
</dbReference>
<dbReference type="Gene3D" id="4.10.1110.10">
    <property type="entry name" value="AN1-like Zinc finger"/>
    <property type="match status" value="1"/>
</dbReference>
<dbReference type="InterPro" id="IPR035896">
    <property type="entry name" value="AN1-like_Znf"/>
</dbReference>
<dbReference type="InterPro" id="IPR050652">
    <property type="entry name" value="AN1_A20_ZnFinger"/>
</dbReference>
<dbReference type="InterPro" id="IPR002653">
    <property type="entry name" value="Znf_A20"/>
</dbReference>
<dbReference type="InterPro" id="IPR000058">
    <property type="entry name" value="Znf_AN1"/>
</dbReference>
<dbReference type="PANTHER" id="PTHR10634">
    <property type="entry name" value="AN1-TYPE ZINC FINGER PROTEIN"/>
    <property type="match status" value="1"/>
</dbReference>
<dbReference type="PANTHER" id="PTHR10634:SF25">
    <property type="entry name" value="AN1-TYPE ZINC FINGER PROTEIN 6"/>
    <property type="match status" value="1"/>
</dbReference>
<dbReference type="Pfam" id="PF01754">
    <property type="entry name" value="zf-A20"/>
    <property type="match status" value="1"/>
</dbReference>
<dbReference type="Pfam" id="PF01428">
    <property type="entry name" value="zf-AN1"/>
    <property type="match status" value="1"/>
</dbReference>
<dbReference type="SMART" id="SM00259">
    <property type="entry name" value="ZnF_A20"/>
    <property type="match status" value="1"/>
</dbReference>
<dbReference type="SMART" id="SM00154">
    <property type="entry name" value="ZnF_AN1"/>
    <property type="match status" value="1"/>
</dbReference>
<dbReference type="SUPFAM" id="SSF118310">
    <property type="entry name" value="AN1-like Zinc finger"/>
    <property type="match status" value="1"/>
</dbReference>
<dbReference type="SUPFAM" id="SSF57716">
    <property type="entry name" value="Glucocorticoid receptor-like (DNA-binding domain)"/>
    <property type="match status" value="1"/>
</dbReference>
<dbReference type="PROSITE" id="PS51036">
    <property type="entry name" value="ZF_A20"/>
    <property type="match status" value="1"/>
</dbReference>
<dbReference type="PROSITE" id="PS51039">
    <property type="entry name" value="ZF_AN1"/>
    <property type="match status" value="1"/>
</dbReference>
<accession>Q5R7S6</accession>
<comment type="function">
    <text evidence="1">Involved in regulation of TNF-alpha induced NF-kappa-B activation and apoptosis. Involved in modulation of 'Lys-48'-linked polyubiquitination status of TRAF2 and decreases association of TRAF2 with RIPK1. Required for PTS1 target sequence-dependent protein import into peroxisomes and PEX5 stability; may cooperate with PEX6. In vitro involved in PEX5 export from the cytosol to peroxisomes (By similarity).</text>
</comment>
<comment type="subunit">
    <text evidence="1">Interacts with PKN1. Interacts with TRAF2. Interacts with mono- and polyubiquitin. Interacts with PEX6. Interacts with PEX5 (Cys-linked ubiquitinated) (By similarity).</text>
</comment>
<comment type="subcellular location">
    <subcellularLocation>
        <location evidence="1">Cytoplasm</location>
    </subcellularLocation>
</comment>
<comment type="domain">
    <text evidence="1">The A20-type zinc finger domain mediates regulation of NF-kappa-B activity.</text>
</comment>
<comment type="domain">
    <text evidence="1">The AN1-type zinc finger domain mediates association with TRAF2.</text>
</comment>
<organism>
    <name type="scientific">Pongo abelii</name>
    <name type="common">Sumatran orangutan</name>
    <name type="synonym">Pongo pygmaeus abelii</name>
    <dbReference type="NCBI Taxonomy" id="9601"/>
    <lineage>
        <taxon>Eukaryota</taxon>
        <taxon>Metazoa</taxon>
        <taxon>Chordata</taxon>
        <taxon>Craniata</taxon>
        <taxon>Vertebrata</taxon>
        <taxon>Euteleostomi</taxon>
        <taxon>Mammalia</taxon>
        <taxon>Eutheria</taxon>
        <taxon>Euarchontoglires</taxon>
        <taxon>Primates</taxon>
        <taxon>Haplorrhini</taxon>
        <taxon>Catarrhini</taxon>
        <taxon>Hominidae</taxon>
        <taxon>Pongo</taxon>
    </lineage>
</organism>